<feature type="chain" id="PRO_0000143041" description="Porphobilinogen deaminase">
    <location>
        <begin position="1"/>
        <end position="327"/>
    </location>
</feature>
<feature type="modified residue" description="S-(dipyrrolylmethanemethyl)cysteine" evidence="1">
    <location>
        <position position="251"/>
    </location>
</feature>
<organism>
    <name type="scientific">Kluyveromyces lactis (strain ATCC 8585 / CBS 2359 / DSM 70799 / NBRC 1267 / NRRL Y-1140 / WM37)</name>
    <name type="common">Yeast</name>
    <name type="synonym">Candida sphaerica</name>
    <dbReference type="NCBI Taxonomy" id="284590"/>
    <lineage>
        <taxon>Eukaryota</taxon>
        <taxon>Fungi</taxon>
        <taxon>Dikarya</taxon>
        <taxon>Ascomycota</taxon>
        <taxon>Saccharomycotina</taxon>
        <taxon>Saccharomycetes</taxon>
        <taxon>Saccharomycetales</taxon>
        <taxon>Saccharomycetaceae</taxon>
        <taxon>Kluyveromyces</taxon>
    </lineage>
</organism>
<dbReference type="EC" id="2.5.1.61"/>
<dbReference type="EMBL" id="CR382123">
    <property type="protein sequence ID" value="CAH01730.1"/>
    <property type="molecule type" value="Genomic_DNA"/>
</dbReference>
<dbReference type="RefSeq" id="XP_452879.1">
    <property type="nucleotide sequence ID" value="XM_452879.1"/>
</dbReference>
<dbReference type="SMR" id="Q6CT60"/>
<dbReference type="FunCoup" id="Q6CT60">
    <property type="interactions" value="670"/>
</dbReference>
<dbReference type="STRING" id="284590.Q6CT60"/>
<dbReference type="PaxDb" id="284590-Q6CT60"/>
<dbReference type="KEGG" id="kla:KLLA0_C15147g"/>
<dbReference type="eggNOG" id="KOG2892">
    <property type="taxonomic scope" value="Eukaryota"/>
</dbReference>
<dbReference type="HOGENOM" id="CLU_019704_0_2_1"/>
<dbReference type="InParanoid" id="Q6CT60"/>
<dbReference type="OMA" id="LWQANHI"/>
<dbReference type="UniPathway" id="UPA00251">
    <property type="reaction ID" value="UER00319"/>
</dbReference>
<dbReference type="Proteomes" id="UP000000598">
    <property type="component" value="Chromosome C"/>
</dbReference>
<dbReference type="GO" id="GO:0005737">
    <property type="term" value="C:cytoplasm"/>
    <property type="evidence" value="ECO:0007669"/>
    <property type="project" value="TreeGrafter"/>
</dbReference>
<dbReference type="GO" id="GO:0004418">
    <property type="term" value="F:hydroxymethylbilane synthase activity"/>
    <property type="evidence" value="ECO:0007669"/>
    <property type="project" value="UniProtKB-EC"/>
</dbReference>
<dbReference type="GO" id="GO:0006782">
    <property type="term" value="P:protoporphyrinogen IX biosynthetic process"/>
    <property type="evidence" value="ECO:0007669"/>
    <property type="project" value="UniProtKB-UniPathway"/>
</dbReference>
<dbReference type="CDD" id="cd13645">
    <property type="entry name" value="PBP2_HuPBGD_like"/>
    <property type="match status" value="1"/>
</dbReference>
<dbReference type="FunFam" id="3.30.160.40:FF:000002">
    <property type="entry name" value="Porphobilinogen deaminase"/>
    <property type="match status" value="1"/>
</dbReference>
<dbReference type="FunFam" id="3.40.190.10:FF:000005">
    <property type="entry name" value="Porphobilinogen deaminase"/>
    <property type="match status" value="1"/>
</dbReference>
<dbReference type="Gene3D" id="3.40.190.10">
    <property type="entry name" value="Periplasmic binding protein-like II"/>
    <property type="match status" value="2"/>
</dbReference>
<dbReference type="Gene3D" id="3.30.160.40">
    <property type="entry name" value="Porphobilinogen deaminase, C-terminal domain"/>
    <property type="match status" value="1"/>
</dbReference>
<dbReference type="InterPro" id="IPR000860">
    <property type="entry name" value="HemC"/>
</dbReference>
<dbReference type="InterPro" id="IPR022419">
    <property type="entry name" value="Porphobilin_deaminase_cofac_BS"/>
</dbReference>
<dbReference type="InterPro" id="IPR022417">
    <property type="entry name" value="Porphobilin_deaminase_N"/>
</dbReference>
<dbReference type="InterPro" id="IPR022418">
    <property type="entry name" value="Porphobilinogen_deaminase_C"/>
</dbReference>
<dbReference type="InterPro" id="IPR036803">
    <property type="entry name" value="Porphobilinogen_deaminase_C_sf"/>
</dbReference>
<dbReference type="NCBIfam" id="TIGR00212">
    <property type="entry name" value="hemC"/>
    <property type="match status" value="1"/>
</dbReference>
<dbReference type="PANTHER" id="PTHR11557">
    <property type="entry name" value="PORPHOBILINOGEN DEAMINASE"/>
    <property type="match status" value="1"/>
</dbReference>
<dbReference type="PANTHER" id="PTHR11557:SF0">
    <property type="entry name" value="PORPHOBILINOGEN DEAMINASE"/>
    <property type="match status" value="1"/>
</dbReference>
<dbReference type="Pfam" id="PF01379">
    <property type="entry name" value="Porphobil_deam"/>
    <property type="match status" value="1"/>
</dbReference>
<dbReference type="Pfam" id="PF03900">
    <property type="entry name" value="Porphobil_deamC"/>
    <property type="match status" value="1"/>
</dbReference>
<dbReference type="PIRSF" id="PIRSF001438">
    <property type="entry name" value="4pyrrol_synth_OHMeBilane_synth"/>
    <property type="match status" value="1"/>
</dbReference>
<dbReference type="PRINTS" id="PR00151">
    <property type="entry name" value="PORPHBDMNASE"/>
</dbReference>
<dbReference type="SUPFAM" id="SSF53850">
    <property type="entry name" value="Periplasmic binding protein-like II"/>
    <property type="match status" value="1"/>
</dbReference>
<dbReference type="SUPFAM" id="SSF54782">
    <property type="entry name" value="Porphobilinogen deaminase (hydroxymethylbilane synthase), C-terminal domain"/>
    <property type="match status" value="1"/>
</dbReference>
<dbReference type="PROSITE" id="PS00533">
    <property type="entry name" value="PORPHOBILINOGEN_DEAM"/>
    <property type="match status" value="1"/>
</dbReference>
<sequence length="327" mass="36045">MESKETVRIGGRRSKLAVVQSEQVKVMIESKFSHIECPLLSVHTLGDQVQSKPLYSFGGKAVWTKELEDLLYKDDESRIDLIVHSLKDMPTLLPDGFELGGITKRVDPTDALVMPIGSPYSSLSELPDGSVVGTSSVRRSAQLKRKFPNLKFESIRGNIQTRLAKLDDPETPYKCIVLASAGLMRSGLDSRITQRFNADTMCYAVGQGALGIEIRKDDEKMKKILKEICDPSTTICCLAERSLLRTLEGGCSVPIGVVSNYDESTKVLTLKGIVINVEGTEWVEIEHKVTISNEREDSINCGKELAAKLTQNGAKEILDSINLDKIT</sequence>
<keyword id="KW-0350">Heme biosynthesis</keyword>
<keyword id="KW-0627">Porphyrin biosynthesis</keyword>
<keyword id="KW-1185">Reference proteome</keyword>
<keyword id="KW-0808">Transferase</keyword>
<proteinExistence type="inferred from homology"/>
<gene>
    <name type="primary">HEM3</name>
    <name type="ordered locus">KLLA0C15147g</name>
</gene>
<comment type="function">
    <text evidence="1">Tetrapolymerization of the monopyrrole PBG into the hydroxymethylbilane pre-uroporphyrinogen in several discrete steps.</text>
</comment>
<comment type="catalytic activity">
    <reaction>
        <text>4 porphobilinogen + H2O = hydroxymethylbilane + 4 NH4(+)</text>
        <dbReference type="Rhea" id="RHEA:13185"/>
        <dbReference type="ChEBI" id="CHEBI:15377"/>
        <dbReference type="ChEBI" id="CHEBI:28938"/>
        <dbReference type="ChEBI" id="CHEBI:57845"/>
        <dbReference type="ChEBI" id="CHEBI:58126"/>
        <dbReference type="EC" id="2.5.1.61"/>
    </reaction>
</comment>
<comment type="cofactor">
    <cofactor evidence="1">
        <name>dipyrromethane</name>
        <dbReference type="ChEBI" id="CHEBI:60342"/>
    </cofactor>
    <text evidence="1">Binds 1 dipyrromethane group covalently.</text>
</comment>
<comment type="pathway">
    <text>Porphyrin-containing compound metabolism; protoporphyrin-IX biosynthesis; coproporphyrinogen-III from 5-aminolevulinate: step 2/4.</text>
</comment>
<comment type="miscellaneous">
    <text>The porphobilinogen subunits are added to the dipyrromethan group.</text>
</comment>
<comment type="similarity">
    <text evidence="2">Belongs to the HMBS family.</text>
</comment>
<name>HEM3_KLULA</name>
<accession>Q6CT60</accession>
<evidence type="ECO:0000250" key="1"/>
<evidence type="ECO:0000305" key="2"/>
<reference key="1">
    <citation type="journal article" date="2004" name="Nature">
        <title>Genome evolution in yeasts.</title>
        <authorList>
            <person name="Dujon B."/>
            <person name="Sherman D."/>
            <person name="Fischer G."/>
            <person name="Durrens P."/>
            <person name="Casaregola S."/>
            <person name="Lafontaine I."/>
            <person name="de Montigny J."/>
            <person name="Marck C."/>
            <person name="Neuveglise C."/>
            <person name="Talla E."/>
            <person name="Goffard N."/>
            <person name="Frangeul L."/>
            <person name="Aigle M."/>
            <person name="Anthouard V."/>
            <person name="Babour A."/>
            <person name="Barbe V."/>
            <person name="Barnay S."/>
            <person name="Blanchin S."/>
            <person name="Beckerich J.-M."/>
            <person name="Beyne E."/>
            <person name="Bleykasten C."/>
            <person name="Boisrame A."/>
            <person name="Boyer J."/>
            <person name="Cattolico L."/>
            <person name="Confanioleri F."/>
            <person name="de Daruvar A."/>
            <person name="Despons L."/>
            <person name="Fabre E."/>
            <person name="Fairhead C."/>
            <person name="Ferry-Dumazet H."/>
            <person name="Groppi A."/>
            <person name="Hantraye F."/>
            <person name="Hennequin C."/>
            <person name="Jauniaux N."/>
            <person name="Joyet P."/>
            <person name="Kachouri R."/>
            <person name="Kerrest A."/>
            <person name="Koszul R."/>
            <person name="Lemaire M."/>
            <person name="Lesur I."/>
            <person name="Ma L."/>
            <person name="Muller H."/>
            <person name="Nicaud J.-M."/>
            <person name="Nikolski M."/>
            <person name="Oztas S."/>
            <person name="Ozier-Kalogeropoulos O."/>
            <person name="Pellenz S."/>
            <person name="Potier S."/>
            <person name="Richard G.-F."/>
            <person name="Straub M.-L."/>
            <person name="Suleau A."/>
            <person name="Swennen D."/>
            <person name="Tekaia F."/>
            <person name="Wesolowski-Louvel M."/>
            <person name="Westhof E."/>
            <person name="Wirth B."/>
            <person name="Zeniou-Meyer M."/>
            <person name="Zivanovic Y."/>
            <person name="Bolotin-Fukuhara M."/>
            <person name="Thierry A."/>
            <person name="Bouchier C."/>
            <person name="Caudron B."/>
            <person name="Scarpelli C."/>
            <person name="Gaillardin C."/>
            <person name="Weissenbach J."/>
            <person name="Wincker P."/>
            <person name="Souciet J.-L."/>
        </authorList>
    </citation>
    <scope>NUCLEOTIDE SEQUENCE [LARGE SCALE GENOMIC DNA]</scope>
    <source>
        <strain>ATCC 8585 / CBS 2359 / DSM 70799 / NBRC 1267 / NRRL Y-1140 / WM37</strain>
    </source>
</reference>
<protein>
    <recommendedName>
        <fullName>Porphobilinogen deaminase</fullName>
        <shortName>PBG</shortName>
        <ecNumber>2.5.1.61</ecNumber>
    </recommendedName>
    <alternativeName>
        <fullName>Hydroxymethylbilane synthase</fullName>
        <shortName>HMBS</shortName>
    </alternativeName>
    <alternativeName>
        <fullName>Pre-uroporphyrinogen synthase</fullName>
    </alternativeName>
</protein>